<accession>P23843</accession>
<accession>P76829</accession>
<name>OPPA_ECOLI</name>
<feature type="signal peptide" evidence="2 5 6 7">
    <location>
        <begin position="1"/>
        <end position="26"/>
    </location>
</feature>
<feature type="chain" id="PRO_0000031797" description="Periplasmic oligopeptide-binding protein OppA">
    <location>
        <begin position="27"/>
        <end position="543"/>
    </location>
</feature>
<feature type="disulfide bond" evidence="3 11 12 13">
    <location>
        <begin position="297"/>
        <end position="443"/>
    </location>
</feature>
<feature type="sequence conflict" description="In Ref. 2; AAA21302." evidence="9" ref="2">
    <original>N</original>
    <variation>Y</variation>
    <location>
        <position position="271"/>
    </location>
</feature>
<feature type="sequence conflict" description="In Ref. 2; AAA21302." evidence="9" ref="2">
    <original>RV</original>
    <variation>LW</variation>
    <location>
        <begin position="314"/>
        <end position="315"/>
    </location>
</feature>
<feature type="sequence conflict" description="In Ref. 2; AAA21302." evidence="9" ref="2">
    <original>QR</original>
    <variation>HG</variation>
    <location>
        <begin position="487"/>
        <end position="488"/>
    </location>
</feature>
<feature type="strand" evidence="16">
    <location>
        <begin position="40"/>
        <end position="44"/>
    </location>
</feature>
<feature type="turn" evidence="16">
    <location>
        <begin position="54"/>
        <end position="56"/>
    </location>
</feature>
<feature type="helix" evidence="16">
    <location>
        <begin position="60"/>
        <end position="69"/>
    </location>
</feature>
<feature type="strand" evidence="16">
    <location>
        <begin position="73"/>
        <end position="76"/>
    </location>
</feature>
<feature type="strand" evidence="16">
    <location>
        <begin position="82"/>
        <end position="93"/>
    </location>
</feature>
<feature type="turn" evidence="16">
    <location>
        <begin position="94"/>
        <end position="96"/>
    </location>
</feature>
<feature type="strand" evidence="16">
    <location>
        <begin position="97"/>
        <end position="102"/>
    </location>
</feature>
<feature type="helix" evidence="16">
    <location>
        <begin position="116"/>
        <end position="127"/>
    </location>
</feature>
<feature type="turn" evidence="16">
    <location>
        <begin position="129"/>
        <end position="131"/>
    </location>
</feature>
<feature type="helix" evidence="16">
    <location>
        <begin position="136"/>
        <end position="142"/>
    </location>
</feature>
<feature type="helix" evidence="16">
    <location>
        <begin position="147"/>
        <end position="151"/>
    </location>
</feature>
<feature type="helix" evidence="16">
    <location>
        <begin position="157"/>
        <end position="159"/>
    </location>
</feature>
<feature type="strand" evidence="16">
    <location>
        <begin position="160"/>
        <end position="166"/>
    </location>
</feature>
<feature type="strand" evidence="16">
    <location>
        <begin position="169"/>
        <end position="176"/>
    </location>
</feature>
<feature type="helix" evidence="16">
    <location>
        <begin position="181"/>
        <end position="186"/>
    </location>
</feature>
<feature type="helix" evidence="16">
    <location>
        <begin position="188"/>
        <end position="190"/>
    </location>
</feature>
<feature type="helix" evidence="16">
    <location>
        <begin position="195"/>
        <end position="201"/>
    </location>
</feature>
<feature type="helix" evidence="16">
    <location>
        <begin position="202"/>
        <end position="204"/>
    </location>
</feature>
<feature type="turn" evidence="16">
    <location>
        <begin position="208"/>
        <end position="210"/>
    </location>
</feature>
<feature type="strand" evidence="16">
    <location>
        <begin position="215"/>
        <end position="223"/>
    </location>
</feature>
<feature type="turn" evidence="16">
    <location>
        <begin position="224"/>
        <end position="226"/>
    </location>
</feature>
<feature type="strand" evidence="16">
    <location>
        <begin position="227"/>
        <end position="232"/>
    </location>
</feature>
<feature type="helix" evidence="16">
    <location>
        <begin position="239"/>
        <end position="241"/>
    </location>
</feature>
<feature type="strand" evidence="16">
    <location>
        <begin position="245"/>
        <end position="250"/>
    </location>
</feature>
<feature type="helix" evidence="16">
    <location>
        <begin position="255"/>
        <end position="263"/>
    </location>
</feature>
<feature type="helix" evidence="16">
    <location>
        <begin position="276"/>
        <end position="285"/>
    </location>
</feature>
<feature type="helix" evidence="16">
    <location>
        <begin position="287"/>
        <end position="289"/>
    </location>
</feature>
<feature type="strand" evidence="16">
    <location>
        <begin position="290"/>
        <end position="303"/>
    </location>
</feature>
<feature type="turn" evidence="16">
    <location>
        <begin position="308"/>
        <end position="311"/>
    </location>
</feature>
<feature type="helix" evidence="16">
    <location>
        <begin position="313"/>
        <end position="322"/>
    </location>
</feature>
<feature type="helix" evidence="16">
    <location>
        <begin position="325"/>
        <end position="330"/>
    </location>
</feature>
<feature type="turn" evidence="16">
    <location>
        <begin position="331"/>
        <end position="333"/>
    </location>
</feature>
<feature type="strand" evidence="16">
    <location>
        <begin position="341"/>
        <end position="344"/>
    </location>
</feature>
<feature type="helix" evidence="16">
    <location>
        <begin position="357"/>
        <end position="360"/>
    </location>
</feature>
<feature type="helix" evidence="16">
    <location>
        <begin position="363"/>
        <end position="376"/>
    </location>
</feature>
<feature type="strand" evidence="14">
    <location>
        <begin position="381"/>
        <end position="383"/>
    </location>
</feature>
<feature type="strand" evidence="16">
    <location>
        <begin position="386"/>
        <end position="393"/>
    </location>
</feature>
<feature type="helix" evidence="16">
    <location>
        <begin position="395"/>
        <end position="412"/>
    </location>
</feature>
<feature type="strand" evidence="16">
    <location>
        <begin position="415"/>
        <end position="421"/>
    </location>
</feature>
<feature type="helix" evidence="16">
    <location>
        <begin position="423"/>
        <end position="432"/>
    </location>
</feature>
<feature type="strand" evidence="16">
    <location>
        <begin position="436"/>
        <end position="443"/>
    </location>
</feature>
<feature type="strand" evidence="16">
    <location>
        <begin position="445"/>
        <end position="448"/>
    </location>
</feature>
<feature type="helix" evidence="16">
    <location>
        <begin position="450"/>
        <end position="453"/>
    </location>
</feature>
<feature type="helix" evidence="16">
    <location>
        <begin position="454"/>
        <end position="456"/>
    </location>
</feature>
<feature type="helix" evidence="16">
    <location>
        <begin position="470"/>
        <end position="479"/>
    </location>
</feature>
<feature type="strand" evidence="15">
    <location>
        <begin position="482"/>
        <end position="484"/>
    </location>
</feature>
<feature type="helix" evidence="16">
    <location>
        <begin position="485"/>
        <end position="501"/>
    </location>
</feature>
<feature type="strand" evidence="16">
    <location>
        <begin position="505"/>
        <end position="517"/>
    </location>
</feature>
<feature type="strand" evidence="16">
    <location>
        <begin position="521"/>
        <end position="523"/>
    </location>
</feature>
<feature type="helix" evidence="16">
    <location>
        <begin position="535"/>
        <end position="537"/>
    </location>
</feature>
<feature type="strand" evidence="16">
    <location>
        <begin position="539"/>
        <end position="541"/>
    </location>
</feature>
<proteinExistence type="evidence at protein level"/>
<organism>
    <name type="scientific">Escherichia coli (strain K12)</name>
    <dbReference type="NCBI Taxonomy" id="83333"/>
    <lineage>
        <taxon>Bacteria</taxon>
        <taxon>Pseudomonadati</taxon>
        <taxon>Pseudomonadota</taxon>
        <taxon>Gammaproteobacteria</taxon>
        <taxon>Enterobacterales</taxon>
        <taxon>Enterobacteriaceae</taxon>
        <taxon>Escherichia</taxon>
    </lineage>
</organism>
<keyword id="KW-0002">3D-structure</keyword>
<keyword id="KW-0903">Direct protein sequencing</keyword>
<keyword id="KW-1015">Disulfide bond</keyword>
<keyword id="KW-0571">Peptide transport</keyword>
<keyword id="KW-0574">Periplasm</keyword>
<keyword id="KW-0653">Protein transport</keyword>
<keyword id="KW-1185">Reference proteome</keyword>
<keyword id="KW-0732">Signal</keyword>
<keyword id="KW-0813">Transport</keyword>
<gene>
    <name evidence="8" type="primary">oppA</name>
    <name type="ordered locus">b1243</name>
    <name type="ordered locus">JW1235</name>
</gene>
<sequence length="543" mass="60899">MTNITKRSLVAAGVLAALMAGNVALAADVPAGVTLAEKQTLVRNNGSEVQSLDPHKIEGVPESNISRDLFEGLLVSDLDGHPAPGVAESWDNKDAKVWTFHLRKDAKWSDGTPVTAQDFVYSWQRSVDPNTASPYASYLQYGHIAGIDEILEGKKPITDLGVKAIDDHTLEVTLSEPVPYFYKLLVHPSTSPVPKAAIEKFGEKWTQPGNIVTNGAYTLKDWVVNERIVLERSPTYWNNAKTVINQVTYLPIASEVTDVNRYRSGEIDMTNNSMPIELFQKLKKEIPDEVHVDPYLCTYYYEINNQKPPFNDVRVRTALKLGMDRDIIVNKVKAQGNMPAYGYTPPYTDGAKLTQPEWFGWSQEKRNEEAKKLLAEAGYTADKPLTINLLYNTSDLHKKLAIAASSLWKKNIGVNVKLVNQEWKTFLDTRHQGTFDVARAGWCADYNEPTSFLNTMLSNSSMNTAHYKSPAFDSIMAETLKVTDEAQRTALYTKAEQQLDKDSAIVPVYYYVNARLVKPWVGGYTGKDPLDNTYTRNMYIVKH</sequence>
<reference key="1">
    <citation type="journal article" date="1990" name="J. Biol. Chem.">
        <title>Identification of the polyamine-induced protein as a periplasmic oligopeptide binding protein.</title>
        <authorList>
            <person name="Kashiwagi K."/>
            <person name="Yamaguchi Y."/>
            <person name="Sakai Y."/>
            <person name="Kobayashi H."/>
            <person name="Igarashi K."/>
        </authorList>
    </citation>
    <scope>NUCLEOTIDE SEQUENCE [GENOMIC DNA]</scope>
    <scope>PROTEIN SEQUENCE OF 27-51</scope>
    <scope>FUNCTION</scope>
    <scope>SUBCELLULAR LOCATION</scope>
</reference>
<reference key="2">
    <citation type="submission" date="1993-07" db="EMBL/GenBank/DDBJ databases">
        <authorList>
            <person name="Pahel G."/>
            <person name="Short S.A."/>
        </authorList>
    </citation>
    <scope>NUCLEOTIDE SEQUENCE [GENOMIC DNA]</scope>
    <source>
        <strain>K12</strain>
    </source>
</reference>
<reference key="3">
    <citation type="journal article" date="1996" name="DNA Res.">
        <title>A 570-kb DNA sequence of the Escherichia coli K-12 genome corresponding to the 28.0-40.1 min region on the linkage map.</title>
        <authorList>
            <person name="Aiba H."/>
            <person name="Baba T."/>
            <person name="Fujita K."/>
            <person name="Hayashi K."/>
            <person name="Inada T."/>
            <person name="Isono K."/>
            <person name="Itoh T."/>
            <person name="Kasai H."/>
            <person name="Kashimoto K."/>
            <person name="Kimura S."/>
            <person name="Kitakawa M."/>
            <person name="Kitagawa M."/>
            <person name="Makino K."/>
            <person name="Miki T."/>
            <person name="Mizobuchi K."/>
            <person name="Mori H."/>
            <person name="Mori T."/>
            <person name="Motomura K."/>
            <person name="Nakade S."/>
            <person name="Nakamura Y."/>
            <person name="Nashimoto H."/>
            <person name="Nishio Y."/>
            <person name="Oshima T."/>
            <person name="Saito N."/>
            <person name="Sampei G."/>
            <person name="Seki Y."/>
            <person name="Sivasundaram S."/>
            <person name="Tagami H."/>
            <person name="Takeda J."/>
            <person name="Takemoto K."/>
            <person name="Takeuchi Y."/>
            <person name="Wada C."/>
            <person name="Yamamoto Y."/>
            <person name="Horiuchi T."/>
        </authorList>
    </citation>
    <scope>NUCLEOTIDE SEQUENCE [LARGE SCALE GENOMIC DNA]</scope>
    <source>
        <strain>K12 / W3110 / ATCC 27325 / DSM 5911</strain>
    </source>
</reference>
<reference key="4">
    <citation type="journal article" date="1997" name="Science">
        <title>The complete genome sequence of Escherichia coli K-12.</title>
        <authorList>
            <person name="Blattner F.R."/>
            <person name="Plunkett G. III"/>
            <person name="Bloch C.A."/>
            <person name="Perna N.T."/>
            <person name="Burland V."/>
            <person name="Riley M."/>
            <person name="Collado-Vides J."/>
            <person name="Glasner J.D."/>
            <person name="Rode C.K."/>
            <person name="Mayhew G.F."/>
            <person name="Gregor J."/>
            <person name="Davis N.W."/>
            <person name="Kirkpatrick H.A."/>
            <person name="Goeden M.A."/>
            <person name="Rose D.J."/>
            <person name="Mau B."/>
            <person name="Shao Y."/>
        </authorList>
    </citation>
    <scope>NUCLEOTIDE SEQUENCE [LARGE SCALE GENOMIC DNA]</scope>
    <source>
        <strain>K12 / MG1655 / ATCC 47076</strain>
    </source>
</reference>
<reference key="5">
    <citation type="journal article" date="2006" name="Mol. Syst. Biol.">
        <title>Highly accurate genome sequences of Escherichia coli K-12 strains MG1655 and W3110.</title>
        <authorList>
            <person name="Hayashi K."/>
            <person name="Morooka N."/>
            <person name="Yamamoto Y."/>
            <person name="Fujita K."/>
            <person name="Isono K."/>
            <person name="Choi S."/>
            <person name="Ohtsubo E."/>
            <person name="Baba T."/>
            <person name="Wanner B.L."/>
            <person name="Mori H."/>
            <person name="Horiuchi T."/>
        </authorList>
    </citation>
    <scope>NUCLEOTIDE SEQUENCE [LARGE SCALE GENOMIC DNA]</scope>
    <source>
        <strain>K12 / W3110 / ATCC 27325 / DSM 5911</strain>
    </source>
</reference>
<reference key="6">
    <citation type="journal article" date="1991" name="FEBS Lett.">
        <title>Pyruvate-formate-lyase-deactivase and acetyl-CoA reductase activities of Escherichia coli reside on a polymeric protein particle encoded by adhE.</title>
        <authorList>
            <person name="Kessler D."/>
            <person name="Leibrecht I."/>
            <person name="Knappe J."/>
        </authorList>
    </citation>
    <scope>NUCLEOTIDE SEQUENCE [GENOMIC DNA] OF 1-53</scope>
    <source>
        <strain>K12</strain>
    </source>
</reference>
<reference key="7">
    <citation type="submission" date="1996-01" db="EMBL/GenBank/DDBJ databases">
        <authorList>
            <person name="Igarashi K."/>
        </authorList>
    </citation>
    <scope>NUCLEOTIDE SEQUENCE [GENOMIC DNA] OF 1-29</scope>
    <source>
        <strain>DR112</strain>
    </source>
</reference>
<reference key="8">
    <citation type="submission" date="1994-09" db="UniProtKB">
        <authorList>
            <person name="Pasquali C."/>
            <person name="Sanchez J.-C."/>
            <person name="Ravier F."/>
            <person name="Golaz O."/>
            <person name="Hughes G.J."/>
            <person name="Frutiger S."/>
            <person name="Paquet N."/>
            <person name="Wilkins M."/>
            <person name="Appel R.D."/>
            <person name="Bairoch A."/>
            <person name="Hochstrasser D.F."/>
        </authorList>
    </citation>
    <scope>PROTEIN SEQUENCE OF 27-37</scope>
    <source>
        <strain>K12 / W3110 / ATCC 27325 / DSM 5911</strain>
    </source>
</reference>
<reference key="9">
    <citation type="journal article" date="1997" name="Electrophoresis">
        <title>Comparing the predicted and observed properties of proteins encoded in the genome of Escherichia coli K-12.</title>
        <authorList>
            <person name="Link A.J."/>
            <person name="Robison K."/>
            <person name="Church G.M."/>
        </authorList>
    </citation>
    <scope>PROTEIN SEQUENCE OF 27-38</scope>
    <source>
        <strain>K12 / EMG2</strain>
    </source>
</reference>
<reference key="10">
    <citation type="journal article" date="1998" name="J. Mol. Biol.">
        <title>Protein identification with N and C-terminal sequence tags in proteome projects.</title>
        <authorList>
            <person name="Wilkins M.R."/>
            <person name="Gasteiger E."/>
            <person name="Tonella L."/>
            <person name="Ou K."/>
            <person name="Tyler M."/>
            <person name="Sanchez J.-C."/>
            <person name="Gooley A.A."/>
            <person name="Walsh B.J."/>
            <person name="Bairoch A."/>
            <person name="Appel R.D."/>
            <person name="Williams K.L."/>
            <person name="Hochstrasser D.F."/>
        </authorList>
    </citation>
    <scope>PROTEIN SEQUENCE OF 27-30</scope>
    <source>
        <strain>K12 / W3110 / ATCC 27325 / DSM 5911</strain>
    </source>
</reference>
<reference key="11">
    <citation type="journal article" date="1986" name="J. Bacteriol.">
        <title>Binding specificity of the periplasmic oligopeptide-binding protein from Escherichia coli.</title>
        <authorList>
            <person name="Guyer C.A."/>
            <person name="Morgan D.G."/>
            <person name="Staros J.V."/>
        </authorList>
    </citation>
    <scope>FUNCTION</scope>
    <source>
        <strain>W</strain>
    </source>
</reference>
<reference key="12">
    <citation type="journal article" date="1998" name="J. Bacteriol.">
        <title>MppA, a periplasmic binding protein essential for import of the bacterial cell wall peptide L-alanyl-gamma-D-glutamyl-meso-diaminopimelate.</title>
        <authorList>
            <person name="Park J.T."/>
            <person name="Raychaudhuri D."/>
            <person name="Li H."/>
            <person name="Normark S."/>
            <person name="Mengin-Lecreulx D."/>
        </authorList>
    </citation>
    <scope>SUBUNIT</scope>
    <source>
        <strain>K12 / AT980</strain>
    </source>
</reference>
<reference key="13">
    <citation type="journal article" date="2011" name="J. Biol. Chem.">
        <title>Compensating stereochemical changes allow murein tripeptide to be accommodated in a conventional peptide-binding protein.</title>
        <authorList>
            <person name="Maqbool A."/>
            <person name="Levdikov V.M."/>
            <person name="Blagova E.V."/>
            <person name="Herve M."/>
            <person name="Horler R.S."/>
            <person name="Wilkinson A.J."/>
            <person name="Thomas G.H."/>
        </authorList>
    </citation>
    <scope>FUNCTION</scope>
    <source>
        <strain>K12</strain>
    </source>
</reference>
<reference evidence="11 12 13" key="14">
    <citation type="journal article" date="2011" name="J. Mol. Biol.">
        <title>Escherichia coli peptide binding protein OppA has a preference for positively charged peptides.</title>
        <authorList>
            <person name="Klepsch M.M."/>
            <person name="Kovermann M."/>
            <person name="Low C."/>
            <person name="Balbach J."/>
            <person name="Permentier H.P."/>
            <person name="Fusetti F."/>
            <person name="de Gier J.W."/>
            <person name="Slotboom D.J."/>
            <person name="Berntsson R.P."/>
        </authorList>
    </citation>
    <scope>X-RAY CRYSTALLOGRAPHY (1.98 ANGSTROMS) OF 27-543 IN COMPLEXES WITH TRIPEPTIDES</scope>
    <scope>FUNCTION</scope>
    <scope>SUBCELLULAR LOCATION</scope>
    <scope>DISULFIDE BOND</scope>
</reference>
<evidence type="ECO:0000269" key="1">
    <source>
    </source>
</evidence>
<evidence type="ECO:0000269" key="2">
    <source>
    </source>
</evidence>
<evidence type="ECO:0000269" key="3">
    <source>
    </source>
</evidence>
<evidence type="ECO:0000269" key="4">
    <source>
    </source>
</evidence>
<evidence type="ECO:0000269" key="5">
    <source>
    </source>
</evidence>
<evidence type="ECO:0000269" key="6">
    <source>
    </source>
</evidence>
<evidence type="ECO:0000269" key="7">
    <source ref="8"/>
</evidence>
<evidence type="ECO:0000303" key="8">
    <source>
    </source>
</evidence>
<evidence type="ECO:0000305" key="9"/>
<evidence type="ECO:0000305" key="10">
    <source>
    </source>
</evidence>
<evidence type="ECO:0007744" key="11">
    <source>
        <dbReference type="PDB" id="3TCF"/>
    </source>
</evidence>
<evidence type="ECO:0007744" key="12">
    <source>
        <dbReference type="PDB" id="3TCG"/>
    </source>
</evidence>
<evidence type="ECO:0007744" key="13">
    <source>
        <dbReference type="PDB" id="3TCH"/>
    </source>
</evidence>
<evidence type="ECO:0007829" key="14">
    <source>
        <dbReference type="PDB" id="3TCF"/>
    </source>
</evidence>
<evidence type="ECO:0007829" key="15">
    <source>
        <dbReference type="PDB" id="3TCG"/>
    </source>
</evidence>
<evidence type="ECO:0007829" key="16">
    <source>
        <dbReference type="PDB" id="3TCH"/>
    </source>
</evidence>
<comment type="function">
    <text evidence="1 2 3 4 9">Part of the ABC transporter complex OppABCDF involved in the uptake of oligopeptides (PubMed:2187863). Plays an important nutritional role (Probable). Binds peptides containing from two to five amino acid residues (PubMed:21983341, PubMed:3536860). Displays a preference for tripeptides and tetrapeptides over dipeptides and pentapeptides, for peptides composed of L-amino acids and for positively charged peptides (PubMed:21983341, PubMed:3536860). Cannot bind the cell wall peptide L-Ala-D-Gly-gamma-meso-diaminopimelic acid (PubMed:21705338).</text>
</comment>
<comment type="subunit">
    <text evidence="10">The complex is composed of two ATP-binding proteins (OppD and OppF), two transmembrane proteins (OppB and OppC) and a solute-binding protein (OppA).</text>
</comment>
<comment type="subcellular location">
    <subcellularLocation>
        <location evidence="2 3">Periplasm</location>
    </subcellularLocation>
</comment>
<comment type="similarity">
    <text evidence="9">Belongs to the bacterial solute-binding protein 5 family.</text>
</comment>
<dbReference type="EMBL" id="J05433">
    <property type="protein sequence ID" value="AAA21302.1"/>
    <property type="molecule type" value="Genomic_DNA"/>
</dbReference>
<dbReference type="EMBL" id="M60918">
    <property type="protein sequence ID" value="AAB00918.1"/>
    <property type="molecule type" value="Genomic_DNA"/>
</dbReference>
<dbReference type="EMBL" id="U00096">
    <property type="protein sequence ID" value="AAC74325.1"/>
    <property type="molecule type" value="Genomic_DNA"/>
</dbReference>
<dbReference type="EMBL" id="AP009048">
    <property type="protein sequence ID" value="BAA14775.2"/>
    <property type="molecule type" value="Genomic_DNA"/>
</dbReference>
<dbReference type="EMBL" id="X59501">
    <property type="protein sequence ID" value="CAA42089.1"/>
    <property type="molecule type" value="Genomic_DNA"/>
</dbReference>
<dbReference type="EMBL" id="D83137">
    <property type="protein sequence ID" value="BAA11814.1"/>
    <property type="molecule type" value="Genomic_DNA"/>
</dbReference>
<dbReference type="PIR" id="F64871">
    <property type="entry name" value="F64871"/>
</dbReference>
<dbReference type="RefSeq" id="NP_415759.1">
    <property type="nucleotide sequence ID" value="NC_000913.3"/>
</dbReference>
<dbReference type="RefSeq" id="WP_001393463.1">
    <property type="nucleotide sequence ID" value="NZ_CP064677.1"/>
</dbReference>
<dbReference type="PDB" id="3TCF">
    <property type="method" value="X-ray"/>
    <property type="resolution" value="2.00 A"/>
    <property type="chains" value="A/B/C/D/E/F/G/H=27-543"/>
</dbReference>
<dbReference type="PDB" id="3TCG">
    <property type="method" value="X-ray"/>
    <property type="resolution" value="2.00 A"/>
    <property type="chains" value="A/B/C/D/E/F/G/H=27-543"/>
</dbReference>
<dbReference type="PDB" id="3TCH">
    <property type="method" value="X-ray"/>
    <property type="resolution" value="1.98 A"/>
    <property type="chains" value="A=27-543"/>
</dbReference>
<dbReference type="PDBsum" id="3TCF"/>
<dbReference type="PDBsum" id="3TCG"/>
<dbReference type="PDBsum" id="3TCH"/>
<dbReference type="SMR" id="P23843"/>
<dbReference type="BioGRID" id="4263482">
    <property type="interactions" value="673"/>
</dbReference>
<dbReference type="BioGRID" id="850197">
    <property type="interactions" value="1"/>
</dbReference>
<dbReference type="ComplexPortal" id="CPX-4344">
    <property type="entry name" value="Oligopeptide ABC transporter complex"/>
</dbReference>
<dbReference type="DIP" id="DIP-10405N"/>
<dbReference type="FunCoup" id="P23843">
    <property type="interactions" value="332"/>
</dbReference>
<dbReference type="IntAct" id="P23843">
    <property type="interactions" value="3"/>
</dbReference>
<dbReference type="STRING" id="511145.b1243"/>
<dbReference type="TCDB" id="3.A.1.5.41">
    <property type="family name" value="the atp-binding cassette (abc) superfamily"/>
</dbReference>
<dbReference type="jPOST" id="P23843"/>
<dbReference type="PaxDb" id="511145-b1243"/>
<dbReference type="EnsemblBacteria" id="AAC74325">
    <property type="protein sequence ID" value="AAC74325"/>
    <property type="gene ID" value="b1243"/>
</dbReference>
<dbReference type="GeneID" id="945830"/>
<dbReference type="KEGG" id="ecj:JW1235"/>
<dbReference type="KEGG" id="eco:b1243"/>
<dbReference type="PATRIC" id="fig|511145.12.peg.1293"/>
<dbReference type="EchoBASE" id="EB0668"/>
<dbReference type="eggNOG" id="COG4166">
    <property type="taxonomic scope" value="Bacteria"/>
</dbReference>
<dbReference type="InParanoid" id="P23843"/>
<dbReference type="PhylomeDB" id="P23843"/>
<dbReference type="BioCyc" id="EcoCyc:OPPA-MONOMER"/>
<dbReference type="BioCyc" id="MetaCyc:OPPA-MONOMER"/>
<dbReference type="EvolutionaryTrace" id="P23843"/>
<dbReference type="PRO" id="PR:P23843"/>
<dbReference type="Proteomes" id="UP000000625">
    <property type="component" value="Chromosome"/>
</dbReference>
<dbReference type="GO" id="GO:0055052">
    <property type="term" value="C:ATP-binding cassette (ABC) transporter complex, substrate-binding subunit-containing"/>
    <property type="evidence" value="ECO:0000303"/>
    <property type="project" value="ComplexPortal"/>
</dbReference>
<dbReference type="GO" id="GO:0016020">
    <property type="term" value="C:membrane"/>
    <property type="evidence" value="ECO:0000303"/>
    <property type="project" value="ComplexPortal"/>
</dbReference>
<dbReference type="GO" id="GO:0030288">
    <property type="term" value="C:outer membrane-bounded periplasmic space"/>
    <property type="evidence" value="ECO:0000314"/>
    <property type="project" value="EcoCyc"/>
</dbReference>
<dbReference type="GO" id="GO:1900750">
    <property type="term" value="F:oligopeptide binding"/>
    <property type="evidence" value="ECO:0000314"/>
    <property type="project" value="EcoCyc"/>
</dbReference>
<dbReference type="GO" id="GO:1904680">
    <property type="term" value="F:peptide transmembrane transporter activity"/>
    <property type="evidence" value="ECO:0000318"/>
    <property type="project" value="GO_Central"/>
</dbReference>
<dbReference type="GO" id="GO:0061077">
    <property type="term" value="P:chaperone-mediated protein folding"/>
    <property type="evidence" value="ECO:0000314"/>
    <property type="project" value="EcoCyc"/>
</dbReference>
<dbReference type="GO" id="GO:0140205">
    <property type="term" value="P:oligopeptide import across plasma membrane"/>
    <property type="evidence" value="ECO:0000303"/>
    <property type="project" value="ComplexPortal"/>
</dbReference>
<dbReference type="GO" id="GO:0006857">
    <property type="term" value="P:oligopeptide transport"/>
    <property type="evidence" value="ECO:0000314"/>
    <property type="project" value="EcoCyc"/>
</dbReference>
<dbReference type="GO" id="GO:0015833">
    <property type="term" value="P:peptide transport"/>
    <property type="evidence" value="ECO:0000318"/>
    <property type="project" value="GO_Central"/>
</dbReference>
<dbReference type="GO" id="GO:0015031">
    <property type="term" value="P:protein transport"/>
    <property type="evidence" value="ECO:0007669"/>
    <property type="project" value="UniProtKB-KW"/>
</dbReference>
<dbReference type="GO" id="GO:0009408">
    <property type="term" value="P:response to heat"/>
    <property type="evidence" value="ECO:0000315"/>
    <property type="project" value="EcoCyc"/>
</dbReference>
<dbReference type="CDD" id="cd08504">
    <property type="entry name" value="PBP2_OppA"/>
    <property type="match status" value="1"/>
</dbReference>
<dbReference type="FunFam" id="3.90.76.10:FF:000001">
    <property type="entry name" value="Oligopeptide ABC transporter substrate-binding protein"/>
    <property type="match status" value="1"/>
</dbReference>
<dbReference type="FunFam" id="3.10.105.10:FF:000001">
    <property type="entry name" value="Oligopeptide ABC transporter, oligopeptide-binding protein"/>
    <property type="match status" value="1"/>
</dbReference>
<dbReference type="FunFam" id="3.40.190.10:FF:000018">
    <property type="entry name" value="Oligopeptide ABC transporter, oligopeptide-binding protein"/>
    <property type="match status" value="1"/>
</dbReference>
<dbReference type="Gene3D" id="3.90.76.10">
    <property type="entry name" value="Dipeptide-binding Protein, Domain 1"/>
    <property type="match status" value="1"/>
</dbReference>
<dbReference type="Gene3D" id="3.10.105.10">
    <property type="entry name" value="Dipeptide-binding Protein, Domain 3"/>
    <property type="match status" value="1"/>
</dbReference>
<dbReference type="Gene3D" id="3.40.190.10">
    <property type="entry name" value="Periplasmic binding protein-like II"/>
    <property type="match status" value="1"/>
</dbReference>
<dbReference type="InterPro" id="IPR030678">
    <property type="entry name" value="Peptide/Ni-bd"/>
</dbReference>
<dbReference type="InterPro" id="IPR039424">
    <property type="entry name" value="SBP_5"/>
</dbReference>
<dbReference type="InterPro" id="IPR023765">
    <property type="entry name" value="SBP_5_CS"/>
</dbReference>
<dbReference type="InterPro" id="IPR000914">
    <property type="entry name" value="SBP_5_dom"/>
</dbReference>
<dbReference type="NCBIfam" id="NF011684">
    <property type="entry name" value="PRK15104.1"/>
    <property type="match status" value="1"/>
</dbReference>
<dbReference type="PANTHER" id="PTHR30290">
    <property type="entry name" value="PERIPLASMIC BINDING COMPONENT OF ABC TRANSPORTER"/>
    <property type="match status" value="1"/>
</dbReference>
<dbReference type="PANTHER" id="PTHR30290:SF10">
    <property type="entry name" value="PERIPLASMIC OLIGOPEPTIDE-BINDING PROTEIN-RELATED"/>
    <property type="match status" value="1"/>
</dbReference>
<dbReference type="Pfam" id="PF00496">
    <property type="entry name" value="SBP_bac_5"/>
    <property type="match status" value="1"/>
</dbReference>
<dbReference type="PIRSF" id="PIRSF002741">
    <property type="entry name" value="MppA"/>
    <property type="match status" value="1"/>
</dbReference>
<dbReference type="SUPFAM" id="SSF53850">
    <property type="entry name" value="Periplasmic binding protein-like II"/>
    <property type="match status" value="1"/>
</dbReference>
<dbReference type="PROSITE" id="PS01040">
    <property type="entry name" value="SBP_BACTERIAL_5"/>
    <property type="match status" value="1"/>
</dbReference>
<protein>
    <recommendedName>
        <fullName evidence="9">Periplasmic oligopeptide-binding protein OppA</fullName>
    </recommendedName>
    <alternativeName>
        <fullName evidence="8">Polyamine-induced protein</fullName>
        <shortName evidence="8">PI protein</shortName>
    </alternativeName>
</protein>